<reference key="1">
    <citation type="journal article" date="2006" name="Science">
        <title>The genome of black cottonwood, Populus trichocarpa (Torr. &amp; Gray).</title>
        <authorList>
            <person name="Tuskan G.A."/>
            <person name="Difazio S."/>
            <person name="Jansson S."/>
            <person name="Bohlmann J."/>
            <person name="Grigoriev I."/>
            <person name="Hellsten U."/>
            <person name="Putnam N."/>
            <person name="Ralph S."/>
            <person name="Rombauts S."/>
            <person name="Salamov A."/>
            <person name="Schein J."/>
            <person name="Sterck L."/>
            <person name="Aerts A."/>
            <person name="Bhalerao R.R."/>
            <person name="Bhalerao R.P."/>
            <person name="Blaudez D."/>
            <person name="Boerjan W."/>
            <person name="Brun A."/>
            <person name="Brunner A."/>
            <person name="Busov V."/>
            <person name="Campbell M."/>
            <person name="Carlson J."/>
            <person name="Chalot M."/>
            <person name="Chapman J."/>
            <person name="Chen G.-L."/>
            <person name="Cooper D."/>
            <person name="Coutinho P.M."/>
            <person name="Couturier J."/>
            <person name="Covert S."/>
            <person name="Cronk Q."/>
            <person name="Cunningham R."/>
            <person name="Davis J."/>
            <person name="Degroeve S."/>
            <person name="Dejardin A."/>
            <person name="dePamphilis C.W."/>
            <person name="Detter J."/>
            <person name="Dirks B."/>
            <person name="Dubchak I."/>
            <person name="Duplessis S."/>
            <person name="Ehlting J."/>
            <person name="Ellis B."/>
            <person name="Gendler K."/>
            <person name="Goodstein D."/>
            <person name="Gribskov M."/>
            <person name="Grimwood J."/>
            <person name="Groover A."/>
            <person name="Gunter L."/>
            <person name="Hamberger B."/>
            <person name="Heinze B."/>
            <person name="Helariutta Y."/>
            <person name="Henrissat B."/>
            <person name="Holligan D."/>
            <person name="Holt R."/>
            <person name="Huang W."/>
            <person name="Islam-Faridi N."/>
            <person name="Jones S."/>
            <person name="Jones-Rhoades M."/>
            <person name="Jorgensen R."/>
            <person name="Joshi C."/>
            <person name="Kangasjaervi J."/>
            <person name="Karlsson J."/>
            <person name="Kelleher C."/>
            <person name="Kirkpatrick R."/>
            <person name="Kirst M."/>
            <person name="Kohler A."/>
            <person name="Kalluri U."/>
            <person name="Larimer F."/>
            <person name="Leebens-Mack J."/>
            <person name="Leple J.-C."/>
            <person name="Locascio P."/>
            <person name="Lou Y."/>
            <person name="Lucas S."/>
            <person name="Martin F."/>
            <person name="Montanini B."/>
            <person name="Napoli C."/>
            <person name="Nelson D.R."/>
            <person name="Nelson C."/>
            <person name="Nieminen K."/>
            <person name="Nilsson O."/>
            <person name="Pereda V."/>
            <person name="Peter G."/>
            <person name="Philippe R."/>
            <person name="Pilate G."/>
            <person name="Poliakov A."/>
            <person name="Razumovskaya J."/>
            <person name="Richardson P."/>
            <person name="Rinaldi C."/>
            <person name="Ritland K."/>
            <person name="Rouze P."/>
            <person name="Ryaboy D."/>
            <person name="Schmutz J."/>
            <person name="Schrader J."/>
            <person name="Segerman B."/>
            <person name="Shin H."/>
            <person name="Siddiqui A."/>
            <person name="Sterky F."/>
            <person name="Terry A."/>
            <person name="Tsai C.-J."/>
            <person name="Uberbacher E."/>
            <person name="Unneberg P."/>
            <person name="Vahala J."/>
            <person name="Wall K."/>
            <person name="Wessler S."/>
            <person name="Yang G."/>
            <person name="Yin T."/>
            <person name="Douglas C."/>
            <person name="Marra M."/>
            <person name="Sandberg G."/>
            <person name="Van de Peer Y."/>
            <person name="Rokhsar D.S."/>
        </authorList>
    </citation>
    <scope>NUCLEOTIDE SEQUENCE [LARGE SCALE GENOMIC DNA]</scope>
    <source>
        <strain>cv. Nisqually</strain>
    </source>
</reference>
<protein>
    <recommendedName>
        <fullName evidence="1">Large ribosomal subunit protein bL36c</fullName>
    </recommendedName>
    <alternativeName>
        <fullName evidence="2">50S ribosomal protein L36, chloroplastic</fullName>
    </alternativeName>
</protein>
<gene>
    <name evidence="1" type="primary">rpl36</name>
    <name type="ordered locus">Poptr_cp057</name>
</gene>
<comment type="subcellular location">
    <subcellularLocation>
        <location>Plastid</location>
        <location>Chloroplast</location>
    </subcellularLocation>
</comment>
<comment type="similarity">
    <text evidence="1">Belongs to the bacterial ribosomal protein bL36 family.</text>
</comment>
<proteinExistence type="inferred from homology"/>
<feature type="chain" id="PRO_0000344780" description="Large ribosomal subunit protein bL36c">
    <location>
        <begin position="1"/>
        <end position="37"/>
    </location>
</feature>
<organism>
    <name type="scientific">Populus trichocarpa</name>
    <name type="common">Western balsam poplar</name>
    <name type="synonym">Populus balsamifera subsp. trichocarpa</name>
    <dbReference type="NCBI Taxonomy" id="3694"/>
    <lineage>
        <taxon>Eukaryota</taxon>
        <taxon>Viridiplantae</taxon>
        <taxon>Streptophyta</taxon>
        <taxon>Embryophyta</taxon>
        <taxon>Tracheophyta</taxon>
        <taxon>Spermatophyta</taxon>
        <taxon>Magnoliopsida</taxon>
        <taxon>eudicotyledons</taxon>
        <taxon>Gunneridae</taxon>
        <taxon>Pentapetalae</taxon>
        <taxon>rosids</taxon>
        <taxon>fabids</taxon>
        <taxon>Malpighiales</taxon>
        <taxon>Salicaceae</taxon>
        <taxon>Saliceae</taxon>
        <taxon>Populus</taxon>
    </lineage>
</organism>
<keyword id="KW-0150">Chloroplast</keyword>
<keyword id="KW-0934">Plastid</keyword>
<keyword id="KW-1185">Reference proteome</keyword>
<keyword id="KW-0687">Ribonucleoprotein</keyword>
<keyword id="KW-0689">Ribosomal protein</keyword>
<accession>A4GYU5</accession>
<geneLocation type="chloroplast"/>
<name>RK36_POPTR</name>
<sequence>MKIRASARKICEKCRLIRRRGRILIICSNPRHKQRQG</sequence>
<dbReference type="EMBL" id="EF489041">
    <property type="protein sequence ID" value="ABO36740.1"/>
    <property type="molecule type" value="Genomic_DNA"/>
</dbReference>
<dbReference type="RefSeq" id="YP_001109536.1">
    <property type="nucleotide sequence ID" value="NC_009143.1"/>
</dbReference>
<dbReference type="SMR" id="A4GYU5"/>
<dbReference type="FunCoup" id="A4GYU5">
    <property type="interactions" value="69"/>
</dbReference>
<dbReference type="STRING" id="3694.A4GYU5"/>
<dbReference type="GeneID" id="4929707"/>
<dbReference type="KEGG" id="pop:4929707"/>
<dbReference type="InParanoid" id="A4GYU5"/>
<dbReference type="Proteomes" id="UP000006729">
    <property type="component" value="Chloroplast"/>
</dbReference>
<dbReference type="GO" id="GO:0009507">
    <property type="term" value="C:chloroplast"/>
    <property type="evidence" value="ECO:0007669"/>
    <property type="project" value="UniProtKB-SubCell"/>
</dbReference>
<dbReference type="GO" id="GO:1990904">
    <property type="term" value="C:ribonucleoprotein complex"/>
    <property type="evidence" value="ECO:0007669"/>
    <property type="project" value="UniProtKB-KW"/>
</dbReference>
<dbReference type="GO" id="GO:0005840">
    <property type="term" value="C:ribosome"/>
    <property type="evidence" value="ECO:0007669"/>
    <property type="project" value="UniProtKB-KW"/>
</dbReference>
<dbReference type="GO" id="GO:0003735">
    <property type="term" value="F:structural constituent of ribosome"/>
    <property type="evidence" value="ECO:0007669"/>
    <property type="project" value="InterPro"/>
</dbReference>
<dbReference type="GO" id="GO:0006412">
    <property type="term" value="P:translation"/>
    <property type="evidence" value="ECO:0007669"/>
    <property type="project" value="UniProtKB-UniRule"/>
</dbReference>
<dbReference type="HAMAP" id="MF_00251">
    <property type="entry name" value="Ribosomal_bL36"/>
    <property type="match status" value="1"/>
</dbReference>
<dbReference type="InterPro" id="IPR000473">
    <property type="entry name" value="Ribosomal_bL36"/>
</dbReference>
<dbReference type="InterPro" id="IPR035977">
    <property type="entry name" value="Ribosomal_bL36_sp"/>
</dbReference>
<dbReference type="NCBIfam" id="TIGR01022">
    <property type="entry name" value="rpmJ_bact"/>
    <property type="match status" value="1"/>
</dbReference>
<dbReference type="PANTHER" id="PTHR42888">
    <property type="entry name" value="50S RIBOSOMAL PROTEIN L36, CHLOROPLASTIC"/>
    <property type="match status" value="1"/>
</dbReference>
<dbReference type="PANTHER" id="PTHR42888:SF1">
    <property type="entry name" value="LARGE RIBOSOMAL SUBUNIT PROTEIN BL36C"/>
    <property type="match status" value="1"/>
</dbReference>
<dbReference type="Pfam" id="PF00444">
    <property type="entry name" value="Ribosomal_L36"/>
    <property type="match status" value="1"/>
</dbReference>
<dbReference type="SUPFAM" id="SSF57840">
    <property type="entry name" value="Ribosomal protein L36"/>
    <property type="match status" value="1"/>
</dbReference>
<dbReference type="PROSITE" id="PS00828">
    <property type="entry name" value="RIBOSOMAL_L36"/>
    <property type="match status" value="1"/>
</dbReference>
<evidence type="ECO:0000255" key="1">
    <source>
        <dbReference type="HAMAP-Rule" id="MF_00251"/>
    </source>
</evidence>
<evidence type="ECO:0000305" key="2"/>